<evidence type="ECO:0000255" key="1">
    <source>
        <dbReference type="HAMAP-Rule" id="MF_00184"/>
    </source>
</evidence>
<evidence type="ECO:0000255" key="2">
    <source>
        <dbReference type="PROSITE-ProRule" id="PRU01228"/>
    </source>
</evidence>
<evidence type="ECO:0000256" key="3">
    <source>
        <dbReference type="SAM" id="MobiDB-lite"/>
    </source>
</evidence>
<evidence type="ECO:0000305" key="4"/>
<protein>
    <recommendedName>
        <fullName evidence="1">Threonine--tRNA ligase</fullName>
        <ecNumber evidence="1">6.1.1.3</ecNumber>
    </recommendedName>
    <alternativeName>
        <fullName evidence="1">Threonyl-tRNA synthetase</fullName>
        <shortName evidence="1">ThrRS</shortName>
    </alternativeName>
</protein>
<feature type="chain" id="PRO_0000100971" description="Threonine--tRNA ligase">
    <location>
        <begin position="1"/>
        <end position="651"/>
    </location>
</feature>
<feature type="domain" description="TGS" evidence="2">
    <location>
        <begin position="1"/>
        <end position="61"/>
    </location>
</feature>
<feature type="region of interest" description="Catalytic" evidence="1">
    <location>
        <begin position="242"/>
        <end position="533"/>
    </location>
</feature>
<feature type="region of interest" description="Disordered" evidence="3">
    <location>
        <begin position="631"/>
        <end position="651"/>
    </location>
</feature>
<feature type="binding site" evidence="1">
    <location>
        <position position="333"/>
    </location>
    <ligand>
        <name>Zn(2+)</name>
        <dbReference type="ChEBI" id="CHEBI:29105"/>
    </ligand>
</feature>
<feature type="binding site" evidence="1">
    <location>
        <position position="384"/>
    </location>
    <ligand>
        <name>Zn(2+)</name>
        <dbReference type="ChEBI" id="CHEBI:29105"/>
    </ligand>
</feature>
<feature type="binding site" evidence="1">
    <location>
        <position position="510"/>
    </location>
    <ligand>
        <name>Zn(2+)</name>
        <dbReference type="ChEBI" id="CHEBI:29105"/>
    </ligand>
</feature>
<accession>Q83C10</accession>
<comment type="function">
    <text evidence="1">Catalyzes the attachment of threonine to tRNA(Thr) in a two-step reaction: L-threonine is first activated by ATP to form Thr-AMP and then transferred to the acceptor end of tRNA(Thr). Also edits incorrectly charged L-seryl-tRNA(Thr).</text>
</comment>
<comment type="catalytic activity">
    <reaction evidence="1">
        <text>tRNA(Thr) + L-threonine + ATP = L-threonyl-tRNA(Thr) + AMP + diphosphate + H(+)</text>
        <dbReference type="Rhea" id="RHEA:24624"/>
        <dbReference type="Rhea" id="RHEA-COMP:9670"/>
        <dbReference type="Rhea" id="RHEA-COMP:9704"/>
        <dbReference type="ChEBI" id="CHEBI:15378"/>
        <dbReference type="ChEBI" id="CHEBI:30616"/>
        <dbReference type="ChEBI" id="CHEBI:33019"/>
        <dbReference type="ChEBI" id="CHEBI:57926"/>
        <dbReference type="ChEBI" id="CHEBI:78442"/>
        <dbReference type="ChEBI" id="CHEBI:78534"/>
        <dbReference type="ChEBI" id="CHEBI:456215"/>
        <dbReference type="EC" id="6.1.1.3"/>
    </reaction>
</comment>
<comment type="cofactor">
    <cofactor evidence="1">
        <name>Zn(2+)</name>
        <dbReference type="ChEBI" id="CHEBI:29105"/>
    </cofactor>
    <text evidence="1">Binds 1 zinc ion per subunit.</text>
</comment>
<comment type="subunit">
    <text evidence="1">Homodimer.</text>
</comment>
<comment type="subcellular location">
    <subcellularLocation>
        <location evidence="1">Cytoplasm</location>
    </subcellularLocation>
</comment>
<comment type="similarity">
    <text evidence="1">Belongs to the class-II aminoacyl-tRNA synthetase family.</text>
</comment>
<comment type="sequence caution" evidence="4">
    <conflict type="erroneous initiation">
        <sequence resource="EMBL-CDS" id="AAO90830"/>
    </conflict>
    <text>Extended N-terminus.</text>
</comment>
<proteinExistence type="inferred from homology"/>
<dbReference type="EC" id="6.1.1.3" evidence="1"/>
<dbReference type="EMBL" id="AE016828">
    <property type="protein sequence ID" value="AAO90830.2"/>
    <property type="status" value="ALT_INIT"/>
    <property type="molecule type" value="Genomic_DNA"/>
</dbReference>
<dbReference type="RefSeq" id="NP_820316.2">
    <property type="nucleotide sequence ID" value="NC_002971.3"/>
</dbReference>
<dbReference type="RefSeq" id="WP_010958151.1">
    <property type="nucleotide sequence ID" value="NC_002971.4"/>
</dbReference>
<dbReference type="SMR" id="Q83C10"/>
<dbReference type="STRING" id="227377.CBU_1326"/>
<dbReference type="EnsemblBacteria" id="AAO90830">
    <property type="protein sequence ID" value="AAO90830"/>
    <property type="gene ID" value="CBU_1326"/>
</dbReference>
<dbReference type="GeneID" id="1209232"/>
<dbReference type="KEGG" id="cbu:CBU_1326"/>
<dbReference type="PATRIC" id="fig|227377.7.peg.1317"/>
<dbReference type="eggNOG" id="COG0441">
    <property type="taxonomic scope" value="Bacteria"/>
</dbReference>
<dbReference type="HOGENOM" id="CLU_008554_0_1_6"/>
<dbReference type="OrthoDB" id="9802304at2"/>
<dbReference type="Proteomes" id="UP000002671">
    <property type="component" value="Chromosome"/>
</dbReference>
<dbReference type="GO" id="GO:0005829">
    <property type="term" value="C:cytosol"/>
    <property type="evidence" value="ECO:0000318"/>
    <property type="project" value="GO_Central"/>
</dbReference>
<dbReference type="GO" id="GO:0005524">
    <property type="term" value="F:ATP binding"/>
    <property type="evidence" value="ECO:0007669"/>
    <property type="project" value="UniProtKB-UniRule"/>
</dbReference>
<dbReference type="GO" id="GO:0046872">
    <property type="term" value="F:metal ion binding"/>
    <property type="evidence" value="ECO:0007669"/>
    <property type="project" value="UniProtKB-KW"/>
</dbReference>
<dbReference type="GO" id="GO:0004829">
    <property type="term" value="F:threonine-tRNA ligase activity"/>
    <property type="evidence" value="ECO:0000318"/>
    <property type="project" value="GO_Central"/>
</dbReference>
<dbReference type="GO" id="GO:0000049">
    <property type="term" value="F:tRNA binding"/>
    <property type="evidence" value="ECO:0007669"/>
    <property type="project" value="UniProtKB-KW"/>
</dbReference>
<dbReference type="GO" id="GO:0006435">
    <property type="term" value="P:threonyl-tRNA aminoacylation"/>
    <property type="evidence" value="ECO:0000318"/>
    <property type="project" value="GO_Central"/>
</dbReference>
<dbReference type="CDD" id="cd01667">
    <property type="entry name" value="TGS_ThrRS"/>
    <property type="match status" value="1"/>
</dbReference>
<dbReference type="CDD" id="cd00860">
    <property type="entry name" value="ThrRS_anticodon"/>
    <property type="match status" value="1"/>
</dbReference>
<dbReference type="CDD" id="cd00771">
    <property type="entry name" value="ThrRS_core"/>
    <property type="match status" value="1"/>
</dbReference>
<dbReference type="FunFam" id="3.10.20.30:FF:000005">
    <property type="entry name" value="Threonine--tRNA ligase"/>
    <property type="match status" value="1"/>
</dbReference>
<dbReference type="FunFam" id="3.30.54.20:FF:000002">
    <property type="entry name" value="Threonine--tRNA ligase"/>
    <property type="match status" value="1"/>
</dbReference>
<dbReference type="FunFam" id="3.30.930.10:FF:000002">
    <property type="entry name" value="Threonine--tRNA ligase"/>
    <property type="match status" value="1"/>
</dbReference>
<dbReference type="FunFam" id="3.40.50.800:FF:000001">
    <property type="entry name" value="Threonine--tRNA ligase"/>
    <property type="match status" value="1"/>
</dbReference>
<dbReference type="FunFam" id="3.30.980.10:FF:000005">
    <property type="entry name" value="Threonyl-tRNA synthetase, mitochondrial"/>
    <property type="match status" value="1"/>
</dbReference>
<dbReference type="Gene3D" id="3.10.20.30">
    <property type="match status" value="1"/>
</dbReference>
<dbReference type="Gene3D" id="3.30.54.20">
    <property type="match status" value="1"/>
</dbReference>
<dbReference type="Gene3D" id="3.40.50.800">
    <property type="entry name" value="Anticodon-binding domain"/>
    <property type="match status" value="1"/>
</dbReference>
<dbReference type="Gene3D" id="3.30.930.10">
    <property type="entry name" value="Bira Bifunctional Protein, Domain 2"/>
    <property type="match status" value="1"/>
</dbReference>
<dbReference type="Gene3D" id="3.30.980.10">
    <property type="entry name" value="Threonyl-trna Synthetase, Chain A, domain 2"/>
    <property type="match status" value="1"/>
</dbReference>
<dbReference type="HAMAP" id="MF_00184">
    <property type="entry name" value="Thr_tRNA_synth"/>
    <property type="match status" value="1"/>
</dbReference>
<dbReference type="InterPro" id="IPR002314">
    <property type="entry name" value="aa-tRNA-synt_IIb"/>
</dbReference>
<dbReference type="InterPro" id="IPR006195">
    <property type="entry name" value="aa-tRNA-synth_II"/>
</dbReference>
<dbReference type="InterPro" id="IPR045864">
    <property type="entry name" value="aa-tRNA-synth_II/BPL/LPL"/>
</dbReference>
<dbReference type="InterPro" id="IPR004154">
    <property type="entry name" value="Anticodon-bd"/>
</dbReference>
<dbReference type="InterPro" id="IPR036621">
    <property type="entry name" value="Anticodon-bd_dom_sf"/>
</dbReference>
<dbReference type="InterPro" id="IPR012675">
    <property type="entry name" value="Beta-grasp_dom_sf"/>
</dbReference>
<dbReference type="InterPro" id="IPR004095">
    <property type="entry name" value="TGS"/>
</dbReference>
<dbReference type="InterPro" id="IPR012676">
    <property type="entry name" value="TGS-like"/>
</dbReference>
<dbReference type="InterPro" id="IPR002320">
    <property type="entry name" value="Thr-tRNA-ligase_IIa"/>
</dbReference>
<dbReference type="InterPro" id="IPR018163">
    <property type="entry name" value="Thr/Ala-tRNA-synth_IIc_edit"/>
</dbReference>
<dbReference type="InterPro" id="IPR047246">
    <property type="entry name" value="ThrRS_anticodon"/>
</dbReference>
<dbReference type="InterPro" id="IPR033728">
    <property type="entry name" value="ThrRS_core"/>
</dbReference>
<dbReference type="InterPro" id="IPR012947">
    <property type="entry name" value="tRNA_SAD"/>
</dbReference>
<dbReference type="NCBIfam" id="TIGR00418">
    <property type="entry name" value="thrS"/>
    <property type="match status" value="1"/>
</dbReference>
<dbReference type="PANTHER" id="PTHR11451:SF44">
    <property type="entry name" value="THREONINE--TRNA LIGASE, CHLOROPLASTIC_MITOCHONDRIAL 2"/>
    <property type="match status" value="1"/>
</dbReference>
<dbReference type="PANTHER" id="PTHR11451">
    <property type="entry name" value="THREONINE-TRNA LIGASE"/>
    <property type="match status" value="1"/>
</dbReference>
<dbReference type="Pfam" id="PF03129">
    <property type="entry name" value="HGTP_anticodon"/>
    <property type="match status" value="1"/>
</dbReference>
<dbReference type="Pfam" id="PF02824">
    <property type="entry name" value="TGS"/>
    <property type="match status" value="1"/>
</dbReference>
<dbReference type="Pfam" id="PF00587">
    <property type="entry name" value="tRNA-synt_2b"/>
    <property type="match status" value="1"/>
</dbReference>
<dbReference type="Pfam" id="PF07973">
    <property type="entry name" value="tRNA_SAD"/>
    <property type="match status" value="1"/>
</dbReference>
<dbReference type="PRINTS" id="PR01047">
    <property type="entry name" value="TRNASYNTHTHR"/>
</dbReference>
<dbReference type="SMART" id="SM00863">
    <property type="entry name" value="tRNA_SAD"/>
    <property type="match status" value="1"/>
</dbReference>
<dbReference type="SUPFAM" id="SSF52954">
    <property type="entry name" value="Class II aaRS ABD-related"/>
    <property type="match status" value="1"/>
</dbReference>
<dbReference type="SUPFAM" id="SSF55681">
    <property type="entry name" value="Class II aaRS and biotin synthetases"/>
    <property type="match status" value="1"/>
</dbReference>
<dbReference type="SUPFAM" id="SSF81271">
    <property type="entry name" value="TGS-like"/>
    <property type="match status" value="1"/>
</dbReference>
<dbReference type="SUPFAM" id="SSF55186">
    <property type="entry name" value="ThrRS/AlaRS common domain"/>
    <property type="match status" value="1"/>
</dbReference>
<dbReference type="PROSITE" id="PS50862">
    <property type="entry name" value="AA_TRNA_LIGASE_II"/>
    <property type="match status" value="1"/>
</dbReference>
<dbReference type="PROSITE" id="PS51880">
    <property type="entry name" value="TGS"/>
    <property type="match status" value="1"/>
</dbReference>
<gene>
    <name evidence="1" type="primary">thrS</name>
    <name type="ordered locus">CBU_1326</name>
</gene>
<name>SYT_COXBU</name>
<sequence length="651" mass="73784">MPTIQLPDGSVKQFSKPVSVQAVAESIGTSLAKPALAGKIDDHLVDVSFIIDKDVSLRIITEKDPEGLEVIRHSAAHLLAHAVKELFPKAEVTIGPVVEDGFYYDFAFERSFTPEDLEKIEEKMRSLAKADLAVERRVLSRDEALTLFKKMGERYKVEIIRDIPKEEILTAYQQGDFIDLCRGPHVPRTGMLKAFKLTKLAGAYWRGDSNNEMLQRIYGTAWADTKALKAYLYRLEEAEKRDHRLLAKKMDLFHFQPESPGNVFWHPNGWSIILQMREYIRHITHKYGYQEVHTPQLIDASLWDKSGHLEKFGDDIFSLPLEPQQYVIKPMSCPAHVQIFNQGVKSYRDLPLRYAEFGACHRNEPSGTLHGLMRLRGFVQDDAHIFCTEDQIQSEVSAFIDQLHEVYADFGFTEVIHKLSTRPEKRVGSDEVWTKAEQALAEALNRKGVEWDILPGEGAFYGPKIEFSLRDCLGRIWQCGTVQVDFSVPERLGAHYIAEDGSKKPPVMIHRAILGSFERFLGILLEESAGKLPLWLAPVQVVVMNITDRQADYVGQTVENLQNLGIRAHSDLRNEKIGFKIREHTIARVPYLVVIGDREVADKTLSVRALEDEASTTITLEEFARQLKAEISQRSRKSPAPSPLFPVGGES</sequence>
<reference key="1">
    <citation type="journal article" date="2003" name="Proc. Natl. Acad. Sci. U.S.A.">
        <title>Complete genome sequence of the Q-fever pathogen, Coxiella burnetii.</title>
        <authorList>
            <person name="Seshadri R."/>
            <person name="Paulsen I.T."/>
            <person name="Eisen J.A."/>
            <person name="Read T.D."/>
            <person name="Nelson K.E."/>
            <person name="Nelson W.C."/>
            <person name="Ward N.L."/>
            <person name="Tettelin H."/>
            <person name="Davidsen T.M."/>
            <person name="Beanan M.J."/>
            <person name="DeBoy R.T."/>
            <person name="Daugherty S.C."/>
            <person name="Brinkac L.M."/>
            <person name="Madupu R."/>
            <person name="Dodson R.J."/>
            <person name="Khouri H.M."/>
            <person name="Lee K.H."/>
            <person name="Carty H.A."/>
            <person name="Scanlan D."/>
            <person name="Heinzen R.A."/>
            <person name="Thompson H.A."/>
            <person name="Samuel J.E."/>
            <person name="Fraser C.M."/>
            <person name="Heidelberg J.F."/>
        </authorList>
    </citation>
    <scope>NUCLEOTIDE SEQUENCE [LARGE SCALE GENOMIC DNA]</scope>
    <source>
        <strain>RSA 493 / Nine Mile phase I</strain>
    </source>
</reference>
<organism>
    <name type="scientific">Coxiella burnetii (strain RSA 493 / Nine Mile phase I)</name>
    <dbReference type="NCBI Taxonomy" id="227377"/>
    <lineage>
        <taxon>Bacteria</taxon>
        <taxon>Pseudomonadati</taxon>
        <taxon>Pseudomonadota</taxon>
        <taxon>Gammaproteobacteria</taxon>
        <taxon>Legionellales</taxon>
        <taxon>Coxiellaceae</taxon>
        <taxon>Coxiella</taxon>
    </lineage>
</organism>
<keyword id="KW-0030">Aminoacyl-tRNA synthetase</keyword>
<keyword id="KW-0067">ATP-binding</keyword>
<keyword id="KW-0963">Cytoplasm</keyword>
<keyword id="KW-0436">Ligase</keyword>
<keyword id="KW-0479">Metal-binding</keyword>
<keyword id="KW-0547">Nucleotide-binding</keyword>
<keyword id="KW-0648">Protein biosynthesis</keyword>
<keyword id="KW-1185">Reference proteome</keyword>
<keyword id="KW-0694">RNA-binding</keyword>
<keyword id="KW-0820">tRNA-binding</keyword>
<keyword id="KW-0862">Zinc</keyword>